<keyword id="KW-0131">Cell cycle</keyword>
<keyword id="KW-0132">Cell division</keyword>
<keyword id="KW-0175">Coiled coil</keyword>
<keyword id="KW-0963">Cytoplasm</keyword>
<keyword id="KW-0206">Cytoskeleton</keyword>
<keyword id="KW-0493">Microtubule</keyword>
<keyword id="KW-0498">Mitosis</keyword>
<keyword id="KW-1185">Reference proteome</keyword>
<keyword id="KW-0879">Wnt signaling pathway</keyword>
<proteinExistence type="evidence at transcript level"/>
<feature type="chain" id="PRO_0000367897" description="Leucine zipper putative tumor suppressor 2 homolog">
    <location>
        <begin position="1"/>
        <end position="666"/>
    </location>
</feature>
<feature type="region of interest" description="Disordered" evidence="2">
    <location>
        <begin position="1"/>
        <end position="35"/>
    </location>
</feature>
<feature type="region of interest" description="Disordered" evidence="2">
    <location>
        <begin position="227"/>
        <end position="249"/>
    </location>
</feature>
<feature type="region of interest" description="Disordered" evidence="2">
    <location>
        <begin position="266"/>
        <end position="307"/>
    </location>
</feature>
<feature type="coiled-coil region" evidence="1">
    <location>
        <begin position="305"/>
        <end position="647"/>
    </location>
</feature>
<feature type="compositionally biased region" description="Polar residues" evidence="2">
    <location>
        <begin position="11"/>
        <end position="35"/>
    </location>
</feature>
<feature type="compositionally biased region" description="Polar residues" evidence="2">
    <location>
        <begin position="227"/>
        <end position="238"/>
    </location>
</feature>
<feature type="compositionally biased region" description="Low complexity" evidence="2">
    <location>
        <begin position="239"/>
        <end position="249"/>
    </location>
</feature>
<feature type="compositionally biased region" description="Low complexity" evidence="2">
    <location>
        <begin position="286"/>
        <end position="304"/>
    </location>
</feature>
<name>LZTS2_XENLA</name>
<comment type="function">
    <text evidence="1">Negative regulator of katanin-mediated microtubule severing and release from the centrosome. Required for central spindle formation and the completion of cytokinesis. Negative regulator of the Wnt signaling pathway. Represses beta-catenin-mediated transcriptional activation by promoting the nuclear exclusion of beta-catenin.</text>
</comment>
<comment type="subcellular location">
    <subcellularLocation>
        <location evidence="1">Cytoplasm</location>
    </subcellularLocation>
    <subcellularLocation>
        <location evidence="1">Cytoplasm</location>
        <location evidence="1">Cytoskeleton</location>
        <location evidence="1">Microtubule organizing center</location>
        <location evidence="1">Centrosome</location>
    </subcellularLocation>
</comment>
<comment type="similarity">
    <text evidence="1">Belongs to the LZTS2 family.</text>
</comment>
<organism>
    <name type="scientific">Xenopus laevis</name>
    <name type="common">African clawed frog</name>
    <dbReference type="NCBI Taxonomy" id="8355"/>
    <lineage>
        <taxon>Eukaryota</taxon>
        <taxon>Metazoa</taxon>
        <taxon>Chordata</taxon>
        <taxon>Craniata</taxon>
        <taxon>Vertebrata</taxon>
        <taxon>Euteleostomi</taxon>
        <taxon>Amphibia</taxon>
        <taxon>Batrachia</taxon>
        <taxon>Anura</taxon>
        <taxon>Pipoidea</taxon>
        <taxon>Pipidae</taxon>
        <taxon>Xenopodinae</taxon>
        <taxon>Xenopus</taxon>
        <taxon>Xenopus</taxon>
    </lineage>
</organism>
<protein>
    <recommendedName>
        <fullName evidence="1">Leucine zipper putative tumor suppressor 2 homolog</fullName>
    </recommendedName>
    <alternativeName>
        <fullName evidence="1">Protein lapser1</fullName>
    </alternativeName>
</protein>
<sequence>MAAVQALPLSIDQNTEASGSQSHTNTRSPVTENTMGSVSSLISGRTYHDKQCRASEFSNKCRKPTNMPNCFKQQEGLLKTNYSSQDFLFNGLPTKKPSTTTSGNNGNYVYVNEDFKEEWHDARVPISPSSDAEDIREERSINGNIRGPPPKLIPISGKLEKNVEKTLIKPTAFKPVVPKKRNPSLQYLVQRNGGPGLSESQSSLNLLFNGNSAGIPEKHNSLSCRNIAHSGTMSDSGRTSLSSLPTSNTNCSHQLDSVSVSMGHINLDNHSNLNGYSDRASRGRTRPSNSDSGRSSSSKSTGSPILNDEILIRELEEKLKDREMELQQLKENLDENEAAICQVYEEKQKRCEQEMEELRQSCALKMKQAAQKAQRLQQVLQLQIFQLQQEKKKLQEDFSQLLQERELLEKRCASFEREQTEFGPRLEETKWEVCQKSGEISLLKQQLKDSQAELAQKSNEILLLRSQFREARCDLQISEEQVQELQDTAHTKTLEMEVCENELQRKKNEAELLREKVSKLDQEVASLREAAVASLRHGLCFCHEKEDPFLLYESDEAKAQRQNADNLQGLQQYVERLREALASERSRYQEQAEHFEDERRKWQEEKEKVIRYQKQLQHNYIQMYQQNRELERDIKQLTVELDAREFNEFDLHGAEIHFEEITATEI</sequence>
<evidence type="ECO:0000255" key="1">
    <source>
        <dbReference type="HAMAP-Rule" id="MF_03026"/>
    </source>
</evidence>
<evidence type="ECO:0000256" key="2">
    <source>
        <dbReference type="SAM" id="MobiDB-lite"/>
    </source>
</evidence>
<reference key="1">
    <citation type="submission" date="2004-10" db="EMBL/GenBank/DDBJ databases">
        <authorList>
            <consortium name="NIH - Xenopus Gene Collection (XGC) project"/>
        </authorList>
    </citation>
    <scope>NUCLEOTIDE SEQUENCE [LARGE SCALE MRNA]</scope>
    <source>
        <tissue>Embryo</tissue>
    </source>
</reference>
<gene>
    <name type="primary">lzts2</name>
    <name type="synonym">lapser1</name>
</gene>
<dbReference type="EMBL" id="BC084933">
    <property type="protein sequence ID" value="AAH84933.1"/>
    <property type="molecule type" value="mRNA"/>
</dbReference>
<dbReference type="SMR" id="Q5U4W1"/>
<dbReference type="OMA" id="AHCMSHS"/>
<dbReference type="Proteomes" id="UP000186698">
    <property type="component" value="Unplaced"/>
</dbReference>
<dbReference type="GO" id="GO:0005813">
    <property type="term" value="C:centrosome"/>
    <property type="evidence" value="ECO:0007669"/>
    <property type="project" value="UniProtKB-SubCell"/>
</dbReference>
<dbReference type="GO" id="GO:0005737">
    <property type="term" value="C:cytoplasm"/>
    <property type="evidence" value="ECO:0007669"/>
    <property type="project" value="UniProtKB-SubCell"/>
</dbReference>
<dbReference type="GO" id="GO:0005874">
    <property type="term" value="C:microtubule"/>
    <property type="evidence" value="ECO:0007669"/>
    <property type="project" value="UniProtKB-KW"/>
</dbReference>
<dbReference type="GO" id="GO:0030496">
    <property type="term" value="C:midbody"/>
    <property type="evidence" value="ECO:0007669"/>
    <property type="project" value="UniProtKB-UniRule"/>
</dbReference>
<dbReference type="GO" id="GO:0051013">
    <property type="term" value="P:microtubule severing"/>
    <property type="evidence" value="ECO:0007669"/>
    <property type="project" value="UniProtKB-UniRule"/>
</dbReference>
<dbReference type="GO" id="GO:0000281">
    <property type="term" value="P:mitotic cytokinesis"/>
    <property type="evidence" value="ECO:0007669"/>
    <property type="project" value="UniProtKB-UniRule"/>
</dbReference>
<dbReference type="GO" id="GO:0090090">
    <property type="term" value="P:negative regulation of canonical Wnt signaling pathway"/>
    <property type="evidence" value="ECO:0000318"/>
    <property type="project" value="GO_Central"/>
</dbReference>
<dbReference type="GO" id="GO:0051168">
    <property type="term" value="P:nuclear export"/>
    <property type="evidence" value="ECO:0007669"/>
    <property type="project" value="UniProtKB-UniRule"/>
</dbReference>
<dbReference type="GO" id="GO:0051255">
    <property type="term" value="P:spindle midzone assembly"/>
    <property type="evidence" value="ECO:0007669"/>
    <property type="project" value="UniProtKB-UniRule"/>
</dbReference>
<dbReference type="GO" id="GO:0016055">
    <property type="term" value="P:Wnt signaling pathway"/>
    <property type="evidence" value="ECO:0007669"/>
    <property type="project" value="UniProtKB-KW"/>
</dbReference>
<dbReference type="HAMAP" id="MF_03026">
    <property type="entry name" value="LZTS2"/>
    <property type="match status" value="1"/>
</dbReference>
<dbReference type="InterPro" id="IPR045329">
    <property type="entry name" value="LZTS"/>
</dbReference>
<dbReference type="InterPro" id="IPR028597">
    <property type="entry name" value="LZTS2"/>
</dbReference>
<dbReference type="PANTHER" id="PTHR19354">
    <property type="entry name" value="ZIPPER PUTATIVE TUMOR SUPPRESSOR 2 HOMOLOG-LIKE PROTEIN-RELATED"/>
    <property type="match status" value="1"/>
</dbReference>
<dbReference type="PANTHER" id="PTHR19354:SF4">
    <property type="entry name" value="ZIPPER PUTATIVE TUMOR SUPPRESSOR 2-RELATED"/>
    <property type="match status" value="1"/>
</dbReference>
<dbReference type="Pfam" id="PF06818">
    <property type="entry name" value="Fez1"/>
    <property type="match status" value="1"/>
</dbReference>
<accession>Q5U4W1</accession>